<organism>
    <name type="scientific">Saccharomyces cerevisiae (strain ATCC 204508 / S288c)</name>
    <name type="common">Baker's yeast</name>
    <dbReference type="NCBI Taxonomy" id="559292"/>
    <lineage>
        <taxon>Eukaryota</taxon>
        <taxon>Fungi</taxon>
        <taxon>Dikarya</taxon>
        <taxon>Ascomycota</taxon>
        <taxon>Saccharomycotina</taxon>
        <taxon>Saccharomycetes</taxon>
        <taxon>Saccharomycetales</taxon>
        <taxon>Saccharomycetaceae</taxon>
        <taxon>Saccharomyces</taxon>
    </lineage>
</organism>
<gene>
    <name type="primary">SSL1</name>
    <name type="ordered locus">YLR005W</name>
</gene>
<accession>Q04673</accession>
<accession>D6VY07</accession>
<accession>E9P8Y6</accession>
<feature type="chain" id="PRO_0000046852" description="General transcription and DNA repair factor IIH subunit SSL1">
    <location>
        <begin position="1"/>
        <end position="461"/>
    </location>
</feature>
<feature type="domain" description="VWFA" evidence="1">
    <location>
        <begin position="125"/>
        <end position="304"/>
    </location>
</feature>
<feature type="zinc finger region" description="C4-type">
    <location>
        <begin position="349"/>
        <end position="366"/>
    </location>
</feature>
<feature type="region of interest" description="Disordered" evidence="2">
    <location>
        <begin position="1"/>
        <end position="70"/>
    </location>
</feature>
<feature type="compositionally biased region" description="Basic and acidic residues" evidence="2">
    <location>
        <begin position="26"/>
        <end position="37"/>
    </location>
</feature>
<feature type="compositionally biased region" description="Basic residues" evidence="2">
    <location>
        <begin position="53"/>
        <end position="63"/>
    </location>
</feature>
<feature type="sequence conflict" description="In Ref. 4; AAT92912." evidence="10" ref="4">
    <original>D</original>
    <variation>G</variation>
    <location>
        <position position="131"/>
    </location>
</feature>
<feature type="helix" evidence="17">
    <location>
        <begin position="75"/>
        <end position="78"/>
    </location>
</feature>
<feature type="helix" evidence="18">
    <location>
        <begin position="83"/>
        <end position="86"/>
    </location>
</feature>
<feature type="helix" evidence="16">
    <location>
        <begin position="97"/>
        <end position="113"/>
    </location>
</feature>
<feature type="strand" evidence="11">
    <location>
        <begin position="125"/>
        <end position="131"/>
    </location>
</feature>
<feature type="helix" evidence="11">
    <location>
        <begin position="134"/>
        <end position="137"/>
    </location>
</feature>
<feature type="strand" evidence="11">
    <location>
        <begin position="139"/>
        <end position="143"/>
    </location>
</feature>
<feature type="helix" evidence="11">
    <location>
        <begin position="145"/>
        <end position="163"/>
    </location>
</feature>
<feature type="strand" evidence="11">
    <location>
        <begin position="168"/>
        <end position="175"/>
    </location>
</feature>
<feature type="strand" evidence="11">
    <location>
        <begin position="178"/>
        <end position="187"/>
    </location>
</feature>
<feature type="helix" evidence="11">
    <location>
        <begin position="189"/>
        <end position="199"/>
    </location>
</feature>
<feature type="helix" evidence="11">
    <location>
        <begin position="210"/>
        <end position="221"/>
    </location>
</feature>
<feature type="strand" evidence="14">
    <location>
        <begin position="222"/>
        <end position="224"/>
    </location>
</feature>
<feature type="strand" evidence="13">
    <location>
        <begin position="226"/>
        <end position="228"/>
    </location>
</feature>
<feature type="strand" evidence="11">
    <location>
        <begin position="231"/>
        <end position="236"/>
    </location>
</feature>
<feature type="strand" evidence="12">
    <location>
        <begin position="238"/>
        <end position="240"/>
    </location>
</feature>
<feature type="helix" evidence="11">
    <location>
        <begin position="247"/>
        <end position="256"/>
    </location>
</feature>
<feature type="strand" evidence="11">
    <location>
        <begin position="260"/>
        <end position="268"/>
    </location>
</feature>
<feature type="helix" evidence="11">
    <location>
        <begin position="271"/>
        <end position="279"/>
    </location>
</feature>
<feature type="turn" evidence="11">
    <location>
        <begin position="280"/>
        <end position="283"/>
    </location>
</feature>
<feature type="helix" evidence="18">
    <location>
        <begin position="285"/>
        <end position="287"/>
    </location>
</feature>
<feature type="strand" evidence="11">
    <location>
        <begin position="288"/>
        <end position="291"/>
    </location>
</feature>
<feature type="helix" evidence="11">
    <location>
        <begin position="294"/>
        <end position="305"/>
    </location>
</feature>
<feature type="strand" evidence="15">
    <location>
        <begin position="311"/>
        <end position="313"/>
    </location>
</feature>
<feature type="strand" evidence="16">
    <location>
        <begin position="319"/>
        <end position="323"/>
    </location>
</feature>
<feature type="strand" evidence="18">
    <location>
        <begin position="326"/>
        <end position="328"/>
    </location>
</feature>
<feature type="turn" evidence="16">
    <location>
        <begin position="337"/>
        <end position="339"/>
    </location>
</feature>
<feature type="strand" evidence="16">
    <location>
        <begin position="342"/>
        <end position="344"/>
    </location>
</feature>
<feature type="strand" evidence="18">
    <location>
        <begin position="346"/>
        <end position="348"/>
    </location>
</feature>
<feature type="turn" evidence="16">
    <location>
        <begin position="350"/>
        <end position="352"/>
    </location>
</feature>
<feature type="strand" evidence="16">
    <location>
        <begin position="355"/>
        <end position="362"/>
    </location>
</feature>
<feature type="turn" evidence="16">
    <location>
        <begin position="364"/>
        <end position="366"/>
    </location>
</feature>
<feature type="helix" evidence="16">
    <location>
        <begin position="373"/>
        <end position="377"/>
    </location>
</feature>
<feature type="helix" evidence="16">
    <location>
        <begin position="378"/>
        <end position="382"/>
    </location>
</feature>
<feature type="turn" evidence="12">
    <location>
        <begin position="394"/>
        <end position="396"/>
    </location>
</feature>
<feature type="turn" evidence="16">
    <location>
        <begin position="404"/>
        <end position="406"/>
    </location>
</feature>
<feature type="turn" evidence="12">
    <location>
        <begin position="418"/>
        <end position="422"/>
    </location>
</feature>
<feature type="turn" evidence="16">
    <location>
        <begin position="430"/>
        <end position="432"/>
    </location>
</feature>
<feature type="helix" evidence="16">
    <location>
        <begin position="438"/>
        <end position="446"/>
    </location>
</feature>
<feature type="helix" evidence="16">
    <location>
        <begin position="452"/>
        <end position="456"/>
    </location>
</feature>
<reference key="1">
    <citation type="journal article" date="1992" name="Genes Dev.">
        <title>SSL1, a suppressor of a HIS4 5'-UTR stem-loop mutation, is essential for translation initiation and affects UV resistance in yeast.</title>
        <authorList>
            <person name="Yoon H."/>
            <person name="Miller S.P."/>
            <person name="Pabich E.K."/>
            <person name="Donahue T.F."/>
        </authorList>
    </citation>
    <scope>NUCLEOTIDE SEQUENCE [GENOMIC DNA]</scope>
</reference>
<reference key="2">
    <citation type="journal article" date="1997" name="Nature">
        <title>The nucleotide sequence of Saccharomyces cerevisiae chromosome XII.</title>
        <authorList>
            <person name="Johnston M."/>
            <person name="Hillier L.W."/>
            <person name="Riles L."/>
            <person name="Albermann K."/>
            <person name="Andre B."/>
            <person name="Ansorge W."/>
            <person name="Benes V."/>
            <person name="Brueckner M."/>
            <person name="Delius H."/>
            <person name="Dubois E."/>
            <person name="Duesterhoeft A."/>
            <person name="Entian K.-D."/>
            <person name="Floeth M."/>
            <person name="Goffeau A."/>
            <person name="Hebling U."/>
            <person name="Heumann K."/>
            <person name="Heuss-Neitzel D."/>
            <person name="Hilbert H."/>
            <person name="Hilger F."/>
            <person name="Kleine K."/>
            <person name="Koetter P."/>
            <person name="Louis E.J."/>
            <person name="Messenguy F."/>
            <person name="Mewes H.-W."/>
            <person name="Miosga T."/>
            <person name="Moestl D."/>
            <person name="Mueller-Auer S."/>
            <person name="Nentwich U."/>
            <person name="Obermaier B."/>
            <person name="Piravandi E."/>
            <person name="Pohl T.M."/>
            <person name="Portetelle D."/>
            <person name="Purnelle B."/>
            <person name="Rechmann S."/>
            <person name="Rieger M."/>
            <person name="Rinke M."/>
            <person name="Rose M."/>
            <person name="Scharfe M."/>
            <person name="Scherens B."/>
            <person name="Scholler P."/>
            <person name="Schwager C."/>
            <person name="Schwarz S."/>
            <person name="Underwood A.P."/>
            <person name="Urrestarazu L.A."/>
            <person name="Vandenbol M."/>
            <person name="Verhasselt P."/>
            <person name="Vierendeels F."/>
            <person name="Voet M."/>
            <person name="Volckaert G."/>
            <person name="Voss H."/>
            <person name="Wambutt R."/>
            <person name="Wedler E."/>
            <person name="Wedler H."/>
            <person name="Zimmermann F.K."/>
            <person name="Zollner A."/>
            <person name="Hani J."/>
            <person name="Hoheisel J.D."/>
        </authorList>
    </citation>
    <scope>NUCLEOTIDE SEQUENCE [LARGE SCALE GENOMIC DNA]</scope>
    <source>
        <strain>ATCC 204508 / S288c</strain>
    </source>
</reference>
<reference key="3">
    <citation type="journal article" date="2014" name="G3 (Bethesda)">
        <title>The reference genome sequence of Saccharomyces cerevisiae: Then and now.</title>
        <authorList>
            <person name="Engel S.R."/>
            <person name="Dietrich F.S."/>
            <person name="Fisk D.G."/>
            <person name="Binkley G."/>
            <person name="Balakrishnan R."/>
            <person name="Costanzo M.C."/>
            <person name="Dwight S.S."/>
            <person name="Hitz B.C."/>
            <person name="Karra K."/>
            <person name="Nash R.S."/>
            <person name="Weng S."/>
            <person name="Wong E.D."/>
            <person name="Lloyd P."/>
            <person name="Skrzypek M.S."/>
            <person name="Miyasato S.R."/>
            <person name="Simison M."/>
            <person name="Cherry J.M."/>
        </authorList>
    </citation>
    <scope>GENOME REANNOTATION</scope>
    <source>
        <strain>ATCC 204508 / S288c</strain>
    </source>
</reference>
<reference key="4">
    <citation type="journal article" date="2007" name="Genome Res.">
        <title>Approaching a complete repository of sequence-verified protein-encoding clones for Saccharomyces cerevisiae.</title>
        <authorList>
            <person name="Hu Y."/>
            <person name="Rolfs A."/>
            <person name="Bhullar B."/>
            <person name="Murthy T.V.S."/>
            <person name="Zhu C."/>
            <person name="Berger M.F."/>
            <person name="Camargo A.A."/>
            <person name="Kelley F."/>
            <person name="McCarron S."/>
            <person name="Jepson D."/>
            <person name="Richardson A."/>
            <person name="Raphael J."/>
            <person name="Moreira D."/>
            <person name="Taycher E."/>
            <person name="Zuo D."/>
            <person name="Mohr S."/>
            <person name="Kane M.F."/>
            <person name="Williamson J."/>
            <person name="Simpson A.J.G."/>
            <person name="Bulyk M.L."/>
            <person name="Harlow E."/>
            <person name="Marsischky G."/>
            <person name="Kolodner R.D."/>
            <person name="LaBaer J."/>
        </authorList>
    </citation>
    <scope>NUCLEOTIDE SEQUENCE [GENOMIC DNA]</scope>
    <source>
        <strain>ATCC 204508 / S288c</strain>
    </source>
</reference>
<reference key="5">
    <citation type="journal article" date="1994" name="Nature">
        <title>A two-component system that regulates an osmosensing MAP kinase cascade in yeast.</title>
        <authorList>
            <person name="Maeda T."/>
            <person name="Wurgler-Murphy S.M."/>
            <person name="Saito H."/>
        </authorList>
    </citation>
    <scope>NUCLEOTIDE SEQUENCE [GENOMIC DNA] OF 400-461</scope>
</reference>
<reference key="6">
    <citation type="journal article" date="1993" name="Cell">
        <title>Dual roles of a multiprotein complex from S. cerevisiae in transcription and DNA repair.</title>
        <authorList>
            <person name="Feaver W.J."/>
            <person name="Svejstrup J.Q."/>
            <person name="Bardwell L."/>
            <person name="Bardwell A.J."/>
            <person name="Buratowski S."/>
            <person name="Gulyas K.D."/>
            <person name="Donahue T.F."/>
            <person name="Friedberg E.C."/>
            <person name="Kornberg R.D."/>
        </authorList>
    </citation>
    <scope>FUNCTION</scope>
</reference>
<reference key="7">
    <citation type="journal article" date="1994" name="J. Biol. Chem.">
        <title>RNA polymerase transcription factor IIH holoenzyme from yeast.</title>
        <authorList>
            <person name="Svejstrup J.Q."/>
            <person name="Feaver W.J."/>
            <person name="LaPointe J."/>
            <person name="Kornberg R.D."/>
        </authorList>
    </citation>
    <scope>FUNCTION OF TFIIH IN RNA POLYMERASE II TRANSCRIPTION</scope>
    <scope>IDENTIFICATION IN THE TFIIH COMPLEX</scope>
</reference>
<reference key="8">
    <citation type="journal article" date="1995" name="Cell">
        <title>Different forms of TFIIH for transcription and DNA repair: holo-TFIIH and a nucleotide excision repairosome.</title>
        <authorList>
            <person name="Svejstrup J.Q."/>
            <person name="Wang Z."/>
            <person name="Feaver W.J."/>
            <person name="Wu X."/>
            <person name="Bushnell D.A."/>
            <person name="Donahue T.F."/>
            <person name="Friedberg E.C."/>
            <person name="Kornberg R.D."/>
        </authorList>
    </citation>
    <scope>FUNCTION</scope>
    <scope>SUBUNIT</scope>
</reference>
<reference key="9">
    <citation type="journal article" date="1996" name="J. Biol. Chem.">
        <title>Reconstitution of TFIIH and requirement of its DNA helicase subunits, Rad3 and Rad25, in the incision step of nucleotide excision repair.</title>
        <authorList>
            <person name="Sung P."/>
            <person name="Guzder S.N."/>
            <person name="Prakash L."/>
            <person name="Prakash S."/>
        </authorList>
    </citation>
    <scope>FUNCTION OF THE TFIIH CORE COMPLEX IN DNA REPAIR</scope>
</reference>
<reference key="10">
    <citation type="journal article" date="2003" name="J. Biol. Chem.">
        <title>Revised subunit structure of yeast transcription factor IIH (TFIIH) and reconciliation with human TFIIH.</title>
        <authorList>
            <person name="Takagi Y."/>
            <person name="Komori H."/>
            <person name="Chang W.-H."/>
            <person name="Hudmon A."/>
            <person name="Erdjument-Bromage H."/>
            <person name="Tempst P."/>
            <person name="Kornberg R.D."/>
        </authorList>
    </citation>
    <scope>IDENTIFICATION IN THE TFIIH CORE COMPLEX</scope>
</reference>
<reference key="11">
    <citation type="journal article" date="2003" name="Nature">
        <title>Global analysis of protein expression in yeast.</title>
        <authorList>
            <person name="Ghaemmaghami S."/>
            <person name="Huh W.-K."/>
            <person name="Bower K."/>
            <person name="Howson R.W."/>
            <person name="Belle A."/>
            <person name="Dephoure N."/>
            <person name="O'Shea E.K."/>
            <person name="Weissman J.S."/>
        </authorList>
    </citation>
    <scope>LEVEL OF PROTEIN EXPRESSION [LARGE SCALE ANALYSIS]</scope>
</reference>
<reference key="12">
    <citation type="journal article" date="2008" name="Mol. Cell. Proteomics">
        <title>A multidimensional chromatography technology for in-depth phosphoproteome analysis.</title>
        <authorList>
            <person name="Albuquerque C.P."/>
            <person name="Smolka M.B."/>
            <person name="Payne S.H."/>
            <person name="Bafna V."/>
            <person name="Eng J."/>
            <person name="Zhou H."/>
        </authorList>
    </citation>
    <scope>IDENTIFICATION BY MASS SPECTROMETRY [LARGE SCALE ANALYSIS]</scope>
</reference>
<reference key="13">
    <citation type="journal article" date="2012" name="Proc. Natl. Acad. Sci. U.S.A.">
        <title>Tfb6, a previously unidentified subunit of the general transcription factor TFIIH, facilitates dissociation of Ssl2 helicase after transcription initiation.</title>
        <authorList>
            <person name="Murakami K."/>
            <person name="Gibbons B.J."/>
            <person name="Davis R.E."/>
            <person name="Nagai S."/>
            <person name="Liu X."/>
            <person name="Robinson P.J."/>
            <person name="Wu T."/>
            <person name="Kaplan C.D."/>
            <person name="Kornberg R.D."/>
        </authorList>
    </citation>
    <scope>IDENTIFICATION BY MASS SPECTROMETRY</scope>
    <scope>SUBUNIT</scope>
</reference>
<reference key="14">
    <citation type="journal article" date="2015" name="J. Biol. Chem.">
        <title>Crystal structure of the Rad3/XPD regulatory domain of Ssl1/p44.</title>
        <authorList>
            <person name="Kim J.S."/>
            <person name="Saint-Andre C."/>
            <person name="Lim H.S."/>
            <person name="Hwang C.S."/>
            <person name="Egly J.M."/>
            <person name="Cho Y."/>
        </authorList>
    </citation>
    <scope>X-RAY CRYSTALLOGRAPHY (2.40 ANGSTROMS) OF 119-310</scope>
</reference>
<name>SSL1_YEAST</name>
<keyword id="KW-0002">3D-structure</keyword>
<keyword id="KW-0227">DNA damage</keyword>
<keyword id="KW-0234">DNA repair</keyword>
<keyword id="KW-0479">Metal-binding</keyword>
<keyword id="KW-0539">Nucleus</keyword>
<keyword id="KW-1185">Reference proteome</keyword>
<keyword id="KW-0804">Transcription</keyword>
<keyword id="KW-0805">Transcription regulation</keyword>
<keyword id="KW-0862">Zinc</keyword>
<keyword id="KW-0863">Zinc-finger</keyword>
<comment type="function">
    <text evidence="6 7 8 9">Component of the general transcription and DNA repair factor IIH (TFIIH) core complex, which is involved in general and transcription-coupled nucleotide excision repair (NER) of damaged DNA and, when complexed to TFIIK, in RNA transcription by RNA polymerase II. In NER, TFIIH acts by opening DNA around the lesion to allow the excision of the damaged oligonucleotide and its replacement by a new DNA fragment. In transcription, TFIIH has an essential role in transcription initiation. When the pre-initiation complex (PIC) has been established, TFIIH is required for promoter opening and promoter escape. Phosphorylation of the C-terminal tail (CTD) of the largest subunit of RNA polymerase II by the kinase module TFIIK controls the initiation of transcription.</text>
</comment>
<comment type="subunit">
    <text evidence="3 5 6 7">Component of the 7-subunit TFIIH core complex composed of XPB/SSL2, XPD/RAD3, SSL1, TFB1, TFB2, TFB4 and TFB5, which is active in NER. The core complex associates with the 3-subunit CTD-kinase module TFIIK composed of CCL1, KIN28 and TFB3 to form the 10-subunit holoenzyme (holo-TFIIH) active in transcription (PubMed:7961739, PubMed:7813015, PubMed:14500720). An additionnal subunit, TFB6, plays a role in the dissociation of the SSL2 helicase from TFIIH after transcription initiation (PubMed:22411836).</text>
</comment>
<comment type="subcellular location">
    <subcellularLocation>
        <location evidence="10">Nucleus</location>
    </subcellularLocation>
</comment>
<comment type="miscellaneous">
    <text evidence="4">Present with 2340 molecules/cell in log phase SD medium.</text>
</comment>
<comment type="similarity">
    <text evidence="10">Belongs to the GTF2H2 family.</text>
</comment>
<protein>
    <recommendedName>
        <fullName>General transcription and DNA repair factor IIH subunit SSL1</fullName>
        <shortName>TFIIH subunit SSL1</shortName>
    </recommendedName>
    <alternativeName>
        <fullName>RNA polymerase II transcription factor B subunit SSL1</fullName>
        <shortName>TFB subunit SSL1</shortName>
    </alternativeName>
    <alternativeName>
        <fullName>Suppressor of stem-loop protein 1</fullName>
    </alternativeName>
</protein>
<evidence type="ECO:0000255" key="1">
    <source>
        <dbReference type="PROSITE-ProRule" id="PRU00219"/>
    </source>
</evidence>
<evidence type="ECO:0000256" key="2">
    <source>
        <dbReference type="SAM" id="MobiDB-lite"/>
    </source>
</evidence>
<evidence type="ECO:0000269" key="3">
    <source>
    </source>
</evidence>
<evidence type="ECO:0000269" key="4">
    <source>
    </source>
</evidence>
<evidence type="ECO:0000269" key="5">
    <source>
    </source>
</evidence>
<evidence type="ECO:0000269" key="6">
    <source>
    </source>
</evidence>
<evidence type="ECO:0000269" key="7">
    <source>
    </source>
</evidence>
<evidence type="ECO:0000269" key="8">
    <source>
    </source>
</evidence>
<evidence type="ECO:0000269" key="9">
    <source>
    </source>
</evidence>
<evidence type="ECO:0000305" key="10"/>
<evidence type="ECO:0007829" key="11">
    <source>
        <dbReference type="PDB" id="4WFQ"/>
    </source>
</evidence>
<evidence type="ECO:0007829" key="12">
    <source>
        <dbReference type="PDB" id="7ML0"/>
    </source>
</evidence>
<evidence type="ECO:0007829" key="13">
    <source>
        <dbReference type="PDB" id="7ML2"/>
    </source>
</evidence>
<evidence type="ECO:0007829" key="14">
    <source>
        <dbReference type="PDB" id="7ML4"/>
    </source>
</evidence>
<evidence type="ECO:0007829" key="15">
    <source>
        <dbReference type="PDB" id="7O4I"/>
    </source>
</evidence>
<evidence type="ECO:0007829" key="16">
    <source>
        <dbReference type="PDB" id="7O4J"/>
    </source>
</evidence>
<evidence type="ECO:0007829" key="17">
    <source>
        <dbReference type="PDB" id="7O75"/>
    </source>
</evidence>
<evidence type="ECO:0007829" key="18">
    <source>
        <dbReference type="PDB" id="7ZS9"/>
    </source>
</evidence>
<proteinExistence type="evidence at protein level"/>
<dbReference type="EMBL" id="Z17385">
    <property type="protein sequence ID" value="CAA78992.1"/>
    <property type="molecule type" value="Genomic_DNA"/>
</dbReference>
<dbReference type="EMBL" id="Z73177">
    <property type="protein sequence ID" value="CAA97527.1"/>
    <property type="molecule type" value="Genomic_DNA"/>
</dbReference>
<dbReference type="EMBL" id="AY692893">
    <property type="protein sequence ID" value="AAT92912.1"/>
    <property type="molecule type" value="Genomic_DNA"/>
</dbReference>
<dbReference type="EMBL" id="L26523">
    <property type="protein sequence ID" value="AAA35101.1"/>
    <property type="molecule type" value="Genomic_DNA"/>
</dbReference>
<dbReference type="EMBL" id="BK006945">
    <property type="protein sequence ID" value="DAA09323.1"/>
    <property type="molecule type" value="Genomic_DNA"/>
</dbReference>
<dbReference type="PIR" id="A46394">
    <property type="entry name" value="A46394"/>
</dbReference>
<dbReference type="RefSeq" id="NP_013105.1">
    <property type="nucleotide sequence ID" value="NM_001181892.1"/>
</dbReference>
<dbReference type="PDB" id="4WFQ">
    <property type="method" value="X-ray"/>
    <property type="resolution" value="2.40 A"/>
    <property type="chains" value="A=119-310"/>
</dbReference>
<dbReference type="PDB" id="5OQJ">
    <property type="method" value="EM"/>
    <property type="resolution" value="4.70 A"/>
    <property type="chains" value="6=1-461"/>
</dbReference>
<dbReference type="PDB" id="5OQM">
    <property type="method" value="EM"/>
    <property type="resolution" value="5.80 A"/>
    <property type="chains" value="6=1-461"/>
</dbReference>
<dbReference type="PDB" id="6GYM">
    <property type="method" value="EM"/>
    <property type="resolution" value="6.70 A"/>
    <property type="chains" value="6=1-461"/>
</dbReference>
<dbReference type="PDB" id="7K01">
    <property type="method" value="EM"/>
    <property type="resolution" value="3.90 A"/>
    <property type="chains" value="6=1-461"/>
</dbReference>
<dbReference type="PDB" id="7K04">
    <property type="method" value="EM"/>
    <property type="resolution" value="9.25 A"/>
    <property type="chains" value="6=1-461"/>
</dbReference>
<dbReference type="PDB" id="7M2U">
    <property type="method" value="EM"/>
    <property type="resolution" value="8.20 A"/>
    <property type="chains" value="6=1-461"/>
</dbReference>
<dbReference type="PDB" id="7ML0">
    <property type="method" value="EM"/>
    <property type="resolution" value="3.00 A"/>
    <property type="chains" value="6=1-461"/>
</dbReference>
<dbReference type="PDB" id="7ML1">
    <property type="method" value="EM"/>
    <property type="resolution" value="4.00 A"/>
    <property type="chains" value="6=1-461"/>
</dbReference>
<dbReference type="PDB" id="7ML2">
    <property type="method" value="EM"/>
    <property type="resolution" value="3.40 A"/>
    <property type="chains" value="6=1-461"/>
</dbReference>
<dbReference type="PDB" id="7ML3">
    <property type="method" value="EM"/>
    <property type="resolution" value="7.60 A"/>
    <property type="chains" value="6=1-461"/>
</dbReference>
<dbReference type="PDB" id="7ML4">
    <property type="method" value="EM"/>
    <property type="resolution" value="3.10 A"/>
    <property type="chains" value="6=1-461"/>
</dbReference>
<dbReference type="PDB" id="7O4I">
    <property type="method" value="EM"/>
    <property type="resolution" value="3.20 A"/>
    <property type="chains" value="6=1-461"/>
</dbReference>
<dbReference type="PDB" id="7O4J">
    <property type="method" value="EM"/>
    <property type="resolution" value="2.90 A"/>
    <property type="chains" value="6=1-461"/>
</dbReference>
<dbReference type="PDB" id="7O4K">
    <property type="method" value="EM"/>
    <property type="resolution" value="3.60 A"/>
    <property type="chains" value="6=1-461"/>
</dbReference>
<dbReference type="PDB" id="7O4L">
    <property type="method" value="EM"/>
    <property type="resolution" value="3.40 A"/>
    <property type="chains" value="6=1-461"/>
</dbReference>
<dbReference type="PDB" id="7O72">
    <property type="method" value="EM"/>
    <property type="resolution" value="3.40 A"/>
    <property type="chains" value="6=1-461"/>
</dbReference>
<dbReference type="PDB" id="7O73">
    <property type="method" value="EM"/>
    <property type="resolution" value="3.40 A"/>
    <property type="chains" value="6=1-461"/>
</dbReference>
<dbReference type="PDB" id="7O75">
    <property type="method" value="EM"/>
    <property type="resolution" value="3.20 A"/>
    <property type="chains" value="6=1-461"/>
</dbReference>
<dbReference type="PDB" id="7ZS9">
    <property type="method" value="EM"/>
    <property type="resolution" value="3.10 A"/>
    <property type="chains" value="6=1-461"/>
</dbReference>
<dbReference type="PDB" id="7ZSA">
    <property type="method" value="EM"/>
    <property type="resolution" value="4.00 A"/>
    <property type="chains" value="6=1-461"/>
</dbReference>
<dbReference type="PDB" id="7ZSB">
    <property type="method" value="EM"/>
    <property type="resolution" value="6.60 A"/>
    <property type="chains" value="6=1-461"/>
</dbReference>
<dbReference type="PDB" id="8CEN">
    <property type="method" value="EM"/>
    <property type="resolution" value="3.00 A"/>
    <property type="chains" value="6=1-461"/>
</dbReference>
<dbReference type="PDB" id="8CEO">
    <property type="method" value="EM"/>
    <property type="resolution" value="3.60 A"/>
    <property type="chains" value="6=1-461"/>
</dbReference>
<dbReference type="PDB" id="8UMH">
    <property type="method" value="EM"/>
    <property type="resolution" value="4.10 A"/>
    <property type="chains" value="6=1-461"/>
</dbReference>
<dbReference type="PDB" id="8UMI">
    <property type="method" value="EM"/>
    <property type="resolution" value="3.70 A"/>
    <property type="chains" value="6=1-461"/>
</dbReference>
<dbReference type="PDB" id="8UOQ">
    <property type="method" value="EM"/>
    <property type="resolution" value="3.80 A"/>
    <property type="chains" value="6=1-461"/>
</dbReference>
<dbReference type="PDB" id="8UOT">
    <property type="method" value="EM"/>
    <property type="resolution" value="3.70 A"/>
    <property type="chains" value="6=1-461"/>
</dbReference>
<dbReference type="PDBsum" id="4WFQ"/>
<dbReference type="PDBsum" id="5OQJ"/>
<dbReference type="PDBsum" id="5OQM"/>
<dbReference type="PDBsum" id="6GYM"/>
<dbReference type="PDBsum" id="7K01"/>
<dbReference type="PDBsum" id="7K04"/>
<dbReference type="PDBsum" id="7M2U"/>
<dbReference type="PDBsum" id="7ML0"/>
<dbReference type="PDBsum" id="7ML1"/>
<dbReference type="PDBsum" id="7ML2"/>
<dbReference type="PDBsum" id="7ML3"/>
<dbReference type="PDBsum" id="7ML4"/>
<dbReference type="PDBsum" id="7O4I"/>
<dbReference type="PDBsum" id="7O4J"/>
<dbReference type="PDBsum" id="7O4K"/>
<dbReference type="PDBsum" id="7O4L"/>
<dbReference type="PDBsum" id="7O72"/>
<dbReference type="PDBsum" id="7O73"/>
<dbReference type="PDBsum" id="7O75"/>
<dbReference type="PDBsum" id="7ZS9"/>
<dbReference type="PDBsum" id="7ZSA"/>
<dbReference type="PDBsum" id="7ZSB"/>
<dbReference type="PDBsum" id="8CEN"/>
<dbReference type="PDBsum" id="8CEO"/>
<dbReference type="PDBsum" id="8UMH"/>
<dbReference type="PDBsum" id="8UMI"/>
<dbReference type="PDBsum" id="8UOQ"/>
<dbReference type="PDBsum" id="8UOT"/>
<dbReference type="EMDB" id="EMD-0092"/>
<dbReference type="EMDB" id="EMD-12719"/>
<dbReference type="EMDB" id="EMD-12720"/>
<dbReference type="EMDB" id="EMD-12721"/>
<dbReference type="EMDB" id="EMD-12722"/>
<dbReference type="EMDB" id="EMD-12743"/>
<dbReference type="EMDB" id="EMD-12744"/>
<dbReference type="EMDB" id="EMD-12745"/>
<dbReference type="EMDB" id="EMD-14927"/>
<dbReference type="EMDB" id="EMD-14928"/>
<dbReference type="EMDB" id="EMD-14929"/>
<dbReference type="EMDB" id="EMD-22587"/>
<dbReference type="EMDB" id="EMD-22588"/>
<dbReference type="EMDB" id="EMD-23904"/>
<dbReference type="EMDB" id="EMD-23905"/>
<dbReference type="EMDB" id="EMD-3846"/>
<dbReference type="EMDB" id="EMD-3850"/>
<dbReference type="EMDB" id="EMD-42437"/>
<dbReference type="EMDB" id="EMD-42438"/>
<dbReference type="SMR" id="Q04673"/>
<dbReference type="BioGRID" id="31278">
    <property type="interactions" value="476"/>
</dbReference>
<dbReference type="ComplexPortal" id="CPX-1659">
    <property type="entry name" value="General transcription factor TFIIH complex"/>
</dbReference>
<dbReference type="DIP" id="DIP-2435N"/>
<dbReference type="FunCoup" id="Q04673">
    <property type="interactions" value="1224"/>
</dbReference>
<dbReference type="IntAct" id="Q04673">
    <property type="interactions" value="16"/>
</dbReference>
<dbReference type="MINT" id="Q04673"/>
<dbReference type="STRING" id="4932.YLR005W"/>
<dbReference type="iPTMnet" id="Q04673"/>
<dbReference type="PaxDb" id="4932-YLR005W"/>
<dbReference type="PeptideAtlas" id="Q04673"/>
<dbReference type="EnsemblFungi" id="YLR005W_mRNA">
    <property type="protein sequence ID" value="YLR005W"/>
    <property type="gene ID" value="YLR005W"/>
</dbReference>
<dbReference type="GeneID" id="850691"/>
<dbReference type="KEGG" id="sce:YLR005W"/>
<dbReference type="AGR" id="SGD:S000003995"/>
<dbReference type="SGD" id="S000003995">
    <property type="gene designation" value="SSL1"/>
</dbReference>
<dbReference type="VEuPathDB" id="FungiDB:YLR005W"/>
<dbReference type="eggNOG" id="KOG2807">
    <property type="taxonomic scope" value="Eukaryota"/>
</dbReference>
<dbReference type="GeneTree" id="ENSGT00490000043395"/>
<dbReference type="HOGENOM" id="CLU_028556_2_0_1"/>
<dbReference type="InParanoid" id="Q04673"/>
<dbReference type="OMA" id="INWVEVP"/>
<dbReference type="OrthoDB" id="284275at2759"/>
<dbReference type="BioCyc" id="YEAST:G3O-32166-MONOMER"/>
<dbReference type="Reactome" id="R-SCE-113418">
    <property type="pathway name" value="Formation of the Early Elongation Complex"/>
</dbReference>
<dbReference type="Reactome" id="R-SCE-674695">
    <property type="pathway name" value="RNA Polymerase II Pre-transcription Events"/>
</dbReference>
<dbReference type="Reactome" id="R-SCE-6781823">
    <property type="pathway name" value="Formation of TC-NER Pre-Incision Complex"/>
</dbReference>
<dbReference type="Reactome" id="R-SCE-6782135">
    <property type="pathway name" value="Dual incision in TC-NER"/>
</dbReference>
<dbReference type="Reactome" id="R-SCE-6782210">
    <property type="pathway name" value="Gap-filling DNA repair synthesis and ligation in TC-NER"/>
</dbReference>
<dbReference type="Reactome" id="R-SCE-6796648">
    <property type="pathway name" value="TP53 Regulates Transcription of DNA Repair Genes"/>
</dbReference>
<dbReference type="Reactome" id="R-SCE-72086">
    <property type="pathway name" value="mRNA Capping"/>
</dbReference>
<dbReference type="Reactome" id="R-SCE-73772">
    <property type="pathway name" value="RNA Polymerase I Promoter Escape"/>
</dbReference>
<dbReference type="Reactome" id="R-SCE-73776">
    <property type="pathway name" value="RNA Polymerase II Promoter Escape"/>
</dbReference>
<dbReference type="Reactome" id="R-SCE-73779">
    <property type="pathway name" value="RNA Polymerase II Transcription Pre-Initiation And Promoter Opening"/>
</dbReference>
<dbReference type="Reactome" id="R-SCE-75953">
    <property type="pathway name" value="RNA Polymerase II Transcription Initiation"/>
</dbReference>
<dbReference type="Reactome" id="R-SCE-76042">
    <property type="pathway name" value="RNA Polymerase II Transcription Initiation And Promoter Clearance"/>
</dbReference>
<dbReference type="Reactome" id="R-SCE-77075">
    <property type="pathway name" value="RNA Pol II CTD phosphorylation and interaction with CE"/>
</dbReference>
<dbReference type="BioGRID-ORCS" id="850691">
    <property type="hits" value="10 hits in 10 CRISPR screens"/>
</dbReference>
<dbReference type="EvolutionaryTrace" id="Q04673"/>
<dbReference type="PRO" id="PR:Q04673"/>
<dbReference type="Proteomes" id="UP000002311">
    <property type="component" value="Chromosome XII"/>
</dbReference>
<dbReference type="RNAct" id="Q04673">
    <property type="molecule type" value="protein"/>
</dbReference>
<dbReference type="GO" id="GO:0000112">
    <property type="term" value="C:nucleotide-excision repair factor 3 complex"/>
    <property type="evidence" value="ECO:0000314"/>
    <property type="project" value="SGD"/>
</dbReference>
<dbReference type="GO" id="GO:0000439">
    <property type="term" value="C:transcription factor TFIIH core complex"/>
    <property type="evidence" value="ECO:0000314"/>
    <property type="project" value="SGD"/>
</dbReference>
<dbReference type="GO" id="GO:0005675">
    <property type="term" value="C:transcription factor TFIIH holo complex"/>
    <property type="evidence" value="ECO:0000314"/>
    <property type="project" value="SGD"/>
</dbReference>
<dbReference type="GO" id="GO:0061630">
    <property type="term" value="F:ubiquitin protein ligase activity"/>
    <property type="evidence" value="ECO:0000314"/>
    <property type="project" value="SGD"/>
</dbReference>
<dbReference type="GO" id="GO:0008270">
    <property type="term" value="F:zinc ion binding"/>
    <property type="evidence" value="ECO:0007669"/>
    <property type="project" value="UniProtKB-KW"/>
</dbReference>
<dbReference type="GO" id="GO:0006289">
    <property type="term" value="P:nucleotide-excision repair"/>
    <property type="evidence" value="ECO:0000314"/>
    <property type="project" value="ComplexPortal"/>
</dbReference>
<dbReference type="GO" id="GO:0006357">
    <property type="term" value="P:regulation of transcription by RNA polymerase II"/>
    <property type="evidence" value="ECO:0000318"/>
    <property type="project" value="GO_Central"/>
</dbReference>
<dbReference type="GO" id="GO:0006366">
    <property type="term" value="P:transcription by RNA polymerase II"/>
    <property type="evidence" value="ECO:0000314"/>
    <property type="project" value="SGD"/>
</dbReference>
<dbReference type="GO" id="GO:0006367">
    <property type="term" value="P:transcription initiation at RNA polymerase II promoter"/>
    <property type="evidence" value="ECO:0000314"/>
    <property type="project" value="ComplexPortal"/>
</dbReference>
<dbReference type="CDD" id="cd01453">
    <property type="entry name" value="vWA_transcription_factor_IIH_type"/>
    <property type="match status" value="1"/>
</dbReference>
<dbReference type="FunFam" id="3.30.40.10:FF:000477">
    <property type="entry name" value="General transcription and DNA repair factor IIH"/>
    <property type="match status" value="1"/>
</dbReference>
<dbReference type="FunFam" id="3.40.50.410:FF:000015">
    <property type="entry name" value="General transcription factor IIH subunit 2"/>
    <property type="match status" value="1"/>
</dbReference>
<dbReference type="Gene3D" id="3.40.50.410">
    <property type="entry name" value="von Willebrand factor, type A domain"/>
    <property type="match status" value="1"/>
</dbReference>
<dbReference type="Gene3D" id="3.30.40.10">
    <property type="entry name" value="Zinc/RING finger domain, C3HC4 (zinc finger)"/>
    <property type="match status" value="1"/>
</dbReference>
<dbReference type="InterPro" id="IPR046349">
    <property type="entry name" value="C1-like_sf"/>
</dbReference>
<dbReference type="InterPro" id="IPR007198">
    <property type="entry name" value="Ssl1-like"/>
</dbReference>
<dbReference type="InterPro" id="IPR004595">
    <property type="entry name" value="TFIIH_C1-like_dom"/>
</dbReference>
<dbReference type="InterPro" id="IPR012170">
    <property type="entry name" value="TFIIH_SSL1/p44"/>
</dbReference>
<dbReference type="InterPro" id="IPR002035">
    <property type="entry name" value="VWF_A"/>
</dbReference>
<dbReference type="InterPro" id="IPR036465">
    <property type="entry name" value="vWFA_dom_sf"/>
</dbReference>
<dbReference type="InterPro" id="IPR013087">
    <property type="entry name" value="Znf_C2H2_type"/>
</dbReference>
<dbReference type="InterPro" id="IPR013083">
    <property type="entry name" value="Znf_RING/FYVE/PHD"/>
</dbReference>
<dbReference type="NCBIfam" id="TIGR00622">
    <property type="entry name" value="ssl1"/>
    <property type="match status" value="1"/>
</dbReference>
<dbReference type="PANTHER" id="PTHR12695">
    <property type="entry name" value="GENERAL TRANSCRIPTION FACTOR IIH SUBUNIT 2"/>
    <property type="match status" value="1"/>
</dbReference>
<dbReference type="PANTHER" id="PTHR12695:SF2">
    <property type="entry name" value="GENERAL TRANSCRIPTION FACTOR IIH SUBUNIT 2-RELATED"/>
    <property type="match status" value="1"/>
</dbReference>
<dbReference type="Pfam" id="PF07975">
    <property type="entry name" value="C1_4"/>
    <property type="match status" value="1"/>
</dbReference>
<dbReference type="Pfam" id="PF04056">
    <property type="entry name" value="Ssl1"/>
    <property type="match status" value="1"/>
</dbReference>
<dbReference type="PIRSF" id="PIRSF015919">
    <property type="entry name" value="TFIIH_SSL1"/>
    <property type="match status" value="1"/>
</dbReference>
<dbReference type="SMART" id="SM01047">
    <property type="entry name" value="C1_4"/>
    <property type="match status" value="1"/>
</dbReference>
<dbReference type="SMART" id="SM00327">
    <property type="entry name" value="VWA"/>
    <property type="match status" value="1"/>
</dbReference>
<dbReference type="SUPFAM" id="SSF57889">
    <property type="entry name" value="Cysteine-rich domain"/>
    <property type="match status" value="1"/>
</dbReference>
<dbReference type="SUPFAM" id="SSF53300">
    <property type="entry name" value="vWA-like"/>
    <property type="match status" value="1"/>
</dbReference>
<dbReference type="PROSITE" id="PS50234">
    <property type="entry name" value="VWFA"/>
    <property type="match status" value="1"/>
</dbReference>
<sequence length="461" mass="52290">MAPVVISESEEDEDRVAITRRTKRQVHFDGEGDDRVDQQQQQHSSSHRDRDKHVQRKKKKRLSNRNLQGSNGGYAWEDEIKRSWDLVKVDDEGDMASLVASIVEARKKRTAKKNITPYQRGIIRSLILTLDCSEAMLEKDLRPNRHAMIIQYAIDFVHEFFDQNPISQMGIIIMRNGLAQLVSQVSGNPQDHIDALKSIRKQEPKGNPSLQNALEMARGLLLPVPAHCTREVLIVFGSLSTTDPGDIHQTIDSLVSEKIRVKVLGLSAQVAICKELCKATNYGDESFYKILLDETHLKELFNEAVTPLPVNKINKGFTLVKMGFPTRIFEDTPTFCSCHSKLVYGGYFCPNCHSKVCSLPTVCPCCDLMLILSTHLARSYHHLMPLKTFAEVPTTEKFRSEDCFSCQSRFPILKNHKNGKLLTSSRYRCEDCKQEFCVDCDVFIHEILHNCPGCESKPVIT</sequence>